<reference key="1">
    <citation type="journal article" date="2009" name="BMC Genomics">
        <title>Genome evolution driven by host adaptations results in a more virulent and antimicrobial-resistant Streptococcus pneumoniae serotype 14.</title>
        <authorList>
            <person name="Ding F."/>
            <person name="Tang P."/>
            <person name="Hsu M.-H."/>
            <person name="Cui P."/>
            <person name="Hu S."/>
            <person name="Yu J."/>
            <person name="Chiu C.-H."/>
        </authorList>
    </citation>
    <scope>NUCLEOTIDE SEQUENCE [LARGE SCALE GENOMIC DNA]</scope>
    <source>
        <strain>CGSP14</strain>
    </source>
</reference>
<feature type="chain" id="PRO_1000095034" description="33 kDa chaperonin">
    <location>
        <begin position="1"/>
        <end position="290"/>
    </location>
</feature>
<feature type="disulfide bond" description="Redox-active" evidence="1">
    <location>
        <begin position="235"/>
        <end position="237"/>
    </location>
</feature>
<feature type="disulfide bond" description="Redox-active" evidence="1">
    <location>
        <begin position="268"/>
        <end position="271"/>
    </location>
</feature>
<proteinExistence type="inferred from homology"/>
<sequence length="290" mass="31677">MDKIIKTISESGAFRAFVLDSTETVRTAQEKHQTQASSTVALGRTLIASQILAANEKGNTKLTVKVLGSSSLGAIITVADTKGNVKGYVQNPGVDIKKTATGEVLVGPFVGNGQFLVITDYGTGNPYNSITPLISGEIGEDLAFYLTESQQTPSAVGLNVLLDEEDKVKIAGGFLVQVLPGAKKEEIARFEKRIQEMPAISTLLESDDHIEALLKAIYGDEAYKRLSEEEIRFQCDCSHERFMNALASLPSSDLQEMKEEDHGAEITCQFCQTTYNFDEKDLEELIRDKS</sequence>
<organism>
    <name type="scientific">Streptococcus pneumoniae (strain CGSP14)</name>
    <dbReference type="NCBI Taxonomy" id="516950"/>
    <lineage>
        <taxon>Bacteria</taxon>
        <taxon>Bacillati</taxon>
        <taxon>Bacillota</taxon>
        <taxon>Bacilli</taxon>
        <taxon>Lactobacillales</taxon>
        <taxon>Streptococcaceae</taxon>
        <taxon>Streptococcus</taxon>
    </lineage>
</organism>
<accession>B2INK7</accession>
<comment type="function">
    <text evidence="1">Redox regulated molecular chaperone. Protects both thermally unfolding and oxidatively damaged proteins from irreversible aggregation. Plays an important role in the bacterial defense system toward oxidative stress.</text>
</comment>
<comment type="subcellular location">
    <subcellularLocation>
        <location evidence="1">Cytoplasm</location>
    </subcellularLocation>
</comment>
<comment type="PTM">
    <text evidence="1">Under oxidizing conditions two disulfide bonds are formed involving the reactive cysteines. Under reducing conditions zinc is bound to the reactive cysteines and the protein is inactive.</text>
</comment>
<comment type="similarity">
    <text evidence="1">Belongs to the HSP33 family.</text>
</comment>
<protein>
    <recommendedName>
        <fullName evidence="1">33 kDa chaperonin</fullName>
    </recommendedName>
    <alternativeName>
        <fullName evidence="1">Heat shock protein 33 homolog</fullName>
        <shortName evidence="1">HSP33</shortName>
    </alternativeName>
</protein>
<name>HSLO_STRPS</name>
<evidence type="ECO:0000255" key="1">
    <source>
        <dbReference type="HAMAP-Rule" id="MF_00117"/>
    </source>
</evidence>
<gene>
    <name evidence="1" type="primary">hslO</name>
    <name type="ordered locus">SPCG_2156</name>
</gene>
<keyword id="KW-0143">Chaperone</keyword>
<keyword id="KW-0963">Cytoplasm</keyword>
<keyword id="KW-1015">Disulfide bond</keyword>
<keyword id="KW-0676">Redox-active center</keyword>
<keyword id="KW-0862">Zinc</keyword>
<dbReference type="EMBL" id="CP001033">
    <property type="protein sequence ID" value="ACB91408.1"/>
    <property type="molecule type" value="Genomic_DNA"/>
</dbReference>
<dbReference type="RefSeq" id="WP_000357844.1">
    <property type="nucleotide sequence ID" value="NC_010582.1"/>
</dbReference>
<dbReference type="SMR" id="B2INK7"/>
<dbReference type="KEGG" id="spw:SPCG_2156"/>
<dbReference type="HOGENOM" id="CLU_054493_1_0_9"/>
<dbReference type="GO" id="GO:0005737">
    <property type="term" value="C:cytoplasm"/>
    <property type="evidence" value="ECO:0007669"/>
    <property type="project" value="UniProtKB-SubCell"/>
</dbReference>
<dbReference type="GO" id="GO:0044183">
    <property type="term" value="F:protein folding chaperone"/>
    <property type="evidence" value="ECO:0007669"/>
    <property type="project" value="TreeGrafter"/>
</dbReference>
<dbReference type="GO" id="GO:0051082">
    <property type="term" value="F:unfolded protein binding"/>
    <property type="evidence" value="ECO:0007669"/>
    <property type="project" value="UniProtKB-UniRule"/>
</dbReference>
<dbReference type="GO" id="GO:0042026">
    <property type="term" value="P:protein refolding"/>
    <property type="evidence" value="ECO:0007669"/>
    <property type="project" value="TreeGrafter"/>
</dbReference>
<dbReference type="CDD" id="cd00498">
    <property type="entry name" value="Hsp33"/>
    <property type="match status" value="1"/>
</dbReference>
<dbReference type="Gene3D" id="3.55.30.10">
    <property type="entry name" value="Hsp33 domain"/>
    <property type="match status" value="1"/>
</dbReference>
<dbReference type="Gene3D" id="3.90.1280.10">
    <property type="entry name" value="HSP33 redox switch-like"/>
    <property type="match status" value="1"/>
</dbReference>
<dbReference type="HAMAP" id="MF_00117">
    <property type="entry name" value="HslO"/>
    <property type="match status" value="1"/>
</dbReference>
<dbReference type="InterPro" id="IPR000397">
    <property type="entry name" value="Heat_shock_Hsp33"/>
</dbReference>
<dbReference type="InterPro" id="IPR016154">
    <property type="entry name" value="Heat_shock_Hsp33_C"/>
</dbReference>
<dbReference type="InterPro" id="IPR016153">
    <property type="entry name" value="Heat_shock_Hsp33_N"/>
</dbReference>
<dbReference type="NCBIfam" id="NF001033">
    <property type="entry name" value="PRK00114.1"/>
    <property type="match status" value="1"/>
</dbReference>
<dbReference type="PANTHER" id="PTHR30111">
    <property type="entry name" value="33 KDA CHAPERONIN"/>
    <property type="match status" value="1"/>
</dbReference>
<dbReference type="PANTHER" id="PTHR30111:SF1">
    <property type="entry name" value="33 KDA CHAPERONIN"/>
    <property type="match status" value="1"/>
</dbReference>
<dbReference type="Pfam" id="PF01430">
    <property type="entry name" value="HSP33"/>
    <property type="match status" value="1"/>
</dbReference>
<dbReference type="PIRSF" id="PIRSF005261">
    <property type="entry name" value="Heat_shock_Hsp33"/>
    <property type="match status" value="1"/>
</dbReference>
<dbReference type="SUPFAM" id="SSF64397">
    <property type="entry name" value="Hsp33 domain"/>
    <property type="match status" value="1"/>
</dbReference>
<dbReference type="SUPFAM" id="SSF118352">
    <property type="entry name" value="HSP33 redox switch-like"/>
    <property type="match status" value="1"/>
</dbReference>